<protein>
    <recommendedName>
        <fullName>Laccase</fullName>
        <ecNumber evidence="2">1.10.3.2</ecNumber>
    </recommendedName>
    <alternativeName>
        <fullName>Benzenediol:oxygen oxidoreductase</fullName>
    </alternativeName>
    <alternativeName>
        <fullName>Diphenol oxidase</fullName>
    </alternativeName>
    <alternativeName>
        <fullName>Ligninolytic phenoloxidase</fullName>
    </alternativeName>
    <alternativeName>
        <fullName>Urishiol oxidase</fullName>
    </alternativeName>
</protein>
<organism>
    <name type="scientific">Trametes hirsuta</name>
    <name type="common">White-rot fungus</name>
    <name type="synonym">Coriolus hirsutus</name>
    <dbReference type="NCBI Taxonomy" id="5327"/>
    <lineage>
        <taxon>Eukaryota</taxon>
        <taxon>Fungi</taxon>
        <taxon>Dikarya</taxon>
        <taxon>Basidiomycota</taxon>
        <taxon>Agaricomycotina</taxon>
        <taxon>Agaricomycetes</taxon>
        <taxon>Polyporales</taxon>
        <taxon>Polyporaceae</taxon>
        <taxon>Trametes</taxon>
    </lineage>
</organism>
<feature type="signal peptide">
    <location>
        <begin position="1"/>
        <end position="21"/>
    </location>
</feature>
<feature type="chain" id="PRO_0000002939" description="Laccase">
    <location>
        <begin position="22"/>
        <end position="520"/>
    </location>
</feature>
<feature type="domain" description="Plastocyanin-like 1">
    <location>
        <begin position="23"/>
        <end position="148"/>
    </location>
</feature>
<feature type="domain" description="Plastocyanin-like 2">
    <location>
        <begin position="160"/>
        <end position="302"/>
    </location>
</feature>
<feature type="domain" description="Plastocyanin-like 3">
    <location>
        <begin position="369"/>
        <end position="491"/>
    </location>
</feature>
<feature type="binding site" description="type 2 copper site" evidence="1">
    <location>
        <position position="85"/>
    </location>
    <ligand>
        <name>Cu cation</name>
        <dbReference type="ChEBI" id="CHEBI:23378"/>
        <label>1</label>
    </ligand>
</feature>
<feature type="binding site" description="type 3 copper site" evidence="1">
    <location>
        <position position="87"/>
    </location>
    <ligand>
        <name>Cu cation</name>
        <dbReference type="ChEBI" id="CHEBI:23378"/>
        <label>2</label>
    </ligand>
</feature>
<feature type="binding site" description="type 3 copper site" evidence="1">
    <location>
        <position position="130"/>
    </location>
    <ligand>
        <name>Cu cation</name>
        <dbReference type="ChEBI" id="CHEBI:23378"/>
        <label>2</label>
    </ligand>
</feature>
<feature type="binding site" description="type 3 copper site" evidence="1">
    <location>
        <position position="132"/>
    </location>
    <ligand>
        <name>Cu cation</name>
        <dbReference type="ChEBI" id="CHEBI:23378"/>
        <label>3</label>
    </ligand>
</feature>
<feature type="binding site" description="type 1 copper site" evidence="1">
    <location>
        <position position="416"/>
    </location>
    <ligand>
        <name>Cu cation</name>
        <dbReference type="ChEBI" id="CHEBI:23378"/>
        <label>4</label>
    </ligand>
</feature>
<feature type="binding site" description="type 2 copper site" evidence="1">
    <location>
        <position position="419"/>
    </location>
    <ligand>
        <name>Cu cation</name>
        <dbReference type="ChEBI" id="CHEBI:23378"/>
        <label>1</label>
    </ligand>
</feature>
<feature type="binding site" description="type 3 copper site" evidence="1">
    <location>
        <position position="421"/>
    </location>
    <ligand>
        <name>Cu cation</name>
        <dbReference type="ChEBI" id="CHEBI:23378"/>
        <label>3</label>
    </ligand>
</feature>
<feature type="binding site" description="type 3 copper site" evidence="1">
    <location>
        <position position="473"/>
    </location>
    <ligand>
        <name>Cu cation</name>
        <dbReference type="ChEBI" id="CHEBI:23378"/>
        <label>3</label>
    </ligand>
</feature>
<feature type="binding site" description="type 1 copper site" evidence="1">
    <location>
        <position position="474"/>
    </location>
    <ligand>
        <name>Cu cation</name>
        <dbReference type="ChEBI" id="CHEBI:23378"/>
        <label>4</label>
    </ligand>
</feature>
<feature type="binding site" description="type 3 copper site" evidence="1">
    <location>
        <position position="475"/>
    </location>
    <ligand>
        <name>Cu cation</name>
        <dbReference type="ChEBI" id="CHEBI:23378"/>
        <label>2</label>
    </ligand>
</feature>
<feature type="binding site" description="type 1 copper site" evidence="1">
    <location>
        <position position="479"/>
    </location>
    <ligand>
        <name>Cu cation</name>
        <dbReference type="ChEBI" id="CHEBI:23378"/>
        <label>4</label>
    </ligand>
</feature>
<feature type="glycosylation site" description="N-linked (GlcNAc...) asparagine" evidence="3">
    <location>
        <position position="72"/>
    </location>
</feature>
<feature type="glycosylation site" description="N-linked (GlcNAc...) asparagine" evidence="3">
    <location>
        <position position="75"/>
    </location>
</feature>
<feature type="glycosylation site" description="N-linked (GlcNAc...) asparagine" evidence="3">
    <location>
        <position position="210"/>
    </location>
</feature>
<feature type="glycosylation site" description="N-linked (GlcNAc...) asparagine" evidence="3">
    <location>
        <position position="229"/>
    </location>
</feature>
<feature type="glycosylation site" description="N-linked (GlcNAc...) asparagine" evidence="3">
    <location>
        <position position="354"/>
    </location>
</feature>
<feature type="disulfide bond" evidence="2">
    <location>
        <begin position="106"/>
        <end position="509"/>
    </location>
</feature>
<feature type="disulfide bond" evidence="1">
    <location>
        <begin position="138"/>
        <end position="226"/>
    </location>
</feature>
<feature type="sequence variant" evidence="4">
    <original>A</original>
    <variation>P</variation>
    <location>
        <position position="411"/>
    </location>
</feature>
<feature type="sequence conflict" description="In Ref. 1; AAA33104." evidence="5" ref="1">
    <original>SG</original>
    <variation>RR</variation>
    <location>
        <begin position="378"/>
        <end position="379"/>
    </location>
</feature>
<dbReference type="EC" id="1.10.3.2" evidence="2"/>
<dbReference type="EMBL" id="M60560">
    <property type="protein sequence ID" value="AAA33103.1"/>
    <property type="molecule type" value="Genomic_DNA"/>
</dbReference>
<dbReference type="EMBL" id="M60561">
    <property type="protein sequence ID" value="AAA33104.1"/>
    <property type="molecule type" value="Genomic_DNA"/>
</dbReference>
<dbReference type="PIR" id="A35883">
    <property type="entry name" value="A35883"/>
</dbReference>
<dbReference type="SMR" id="Q02497"/>
<dbReference type="CAZy" id="AA1">
    <property type="family name" value="Auxiliary Activities 1"/>
</dbReference>
<dbReference type="BRENDA" id="1.10.3.2">
    <property type="organism ID" value="1623"/>
</dbReference>
<dbReference type="GO" id="GO:0005576">
    <property type="term" value="C:extracellular region"/>
    <property type="evidence" value="ECO:0007669"/>
    <property type="project" value="UniProtKB-SubCell"/>
</dbReference>
<dbReference type="GO" id="GO:0005507">
    <property type="term" value="F:copper ion binding"/>
    <property type="evidence" value="ECO:0007669"/>
    <property type="project" value="InterPro"/>
</dbReference>
<dbReference type="GO" id="GO:0052716">
    <property type="term" value="F:hydroquinone:oxygen oxidoreductase activity"/>
    <property type="evidence" value="ECO:0007669"/>
    <property type="project" value="UniProtKB-EC"/>
</dbReference>
<dbReference type="GO" id="GO:0046274">
    <property type="term" value="P:lignin catabolic process"/>
    <property type="evidence" value="ECO:0007669"/>
    <property type="project" value="UniProtKB-KW"/>
</dbReference>
<dbReference type="CDD" id="cd13856">
    <property type="entry name" value="CuRO_1_Tv-LCC_like"/>
    <property type="match status" value="1"/>
</dbReference>
<dbReference type="CDD" id="cd13903">
    <property type="entry name" value="CuRO_3_Tv-LCC_like"/>
    <property type="match status" value="1"/>
</dbReference>
<dbReference type="FunFam" id="2.60.40.420:FF:000045">
    <property type="entry name" value="Laccase 2"/>
    <property type="match status" value="1"/>
</dbReference>
<dbReference type="FunFam" id="2.60.40.420:FF:000125">
    <property type="entry name" value="Laccase 2"/>
    <property type="match status" value="1"/>
</dbReference>
<dbReference type="FunFam" id="2.60.40.420:FF:000112">
    <property type="entry name" value="Laccase B"/>
    <property type="match status" value="1"/>
</dbReference>
<dbReference type="Gene3D" id="2.60.40.420">
    <property type="entry name" value="Cupredoxins - blue copper proteins"/>
    <property type="match status" value="3"/>
</dbReference>
<dbReference type="InterPro" id="IPR011707">
    <property type="entry name" value="Cu-oxidase-like_N"/>
</dbReference>
<dbReference type="InterPro" id="IPR001117">
    <property type="entry name" value="Cu-oxidase_2nd"/>
</dbReference>
<dbReference type="InterPro" id="IPR011706">
    <property type="entry name" value="Cu-oxidase_C"/>
</dbReference>
<dbReference type="InterPro" id="IPR045087">
    <property type="entry name" value="Cu-oxidase_fam"/>
</dbReference>
<dbReference type="InterPro" id="IPR033138">
    <property type="entry name" value="Cu_oxidase_CS"/>
</dbReference>
<dbReference type="InterPro" id="IPR008972">
    <property type="entry name" value="Cupredoxin"/>
</dbReference>
<dbReference type="PANTHER" id="PTHR11709:SF394">
    <property type="entry name" value="FI03373P-RELATED"/>
    <property type="match status" value="1"/>
</dbReference>
<dbReference type="PANTHER" id="PTHR11709">
    <property type="entry name" value="MULTI-COPPER OXIDASE"/>
    <property type="match status" value="1"/>
</dbReference>
<dbReference type="Pfam" id="PF00394">
    <property type="entry name" value="Cu-oxidase"/>
    <property type="match status" value="1"/>
</dbReference>
<dbReference type="Pfam" id="PF07731">
    <property type="entry name" value="Cu-oxidase_2"/>
    <property type="match status" value="1"/>
</dbReference>
<dbReference type="Pfam" id="PF07732">
    <property type="entry name" value="Cu-oxidase_3"/>
    <property type="match status" value="1"/>
</dbReference>
<dbReference type="SUPFAM" id="SSF49503">
    <property type="entry name" value="Cupredoxins"/>
    <property type="match status" value="3"/>
</dbReference>
<dbReference type="PROSITE" id="PS00079">
    <property type="entry name" value="MULTICOPPER_OXIDASE1"/>
    <property type="match status" value="1"/>
</dbReference>
<keyword id="KW-0186">Copper</keyword>
<keyword id="KW-0903">Direct protein sequencing</keyword>
<keyword id="KW-1015">Disulfide bond</keyword>
<keyword id="KW-0325">Glycoprotein</keyword>
<keyword id="KW-0439">Lignin degradation</keyword>
<keyword id="KW-0479">Metal-binding</keyword>
<keyword id="KW-0560">Oxidoreductase</keyword>
<keyword id="KW-0677">Repeat</keyword>
<keyword id="KW-0964">Secreted</keyword>
<keyword id="KW-0732">Signal</keyword>
<proteinExistence type="evidence at protein level"/>
<sequence length="520" mass="55688">MSRFQSLLAFVVASLAAVAHAAIGPTADLTISNAEVSPDGFARQAVVVNNVTPGPLVAGNKGDRFQLNVIDNLTNHTMLKSTSIHWHGFFQKGTNWADGPAFVNQCPISSGHSFLYDFQVPDQAGTFWYHSHLSTQYCDGLRGPFVVYDPNDPHASLYDVDNDDTVITLADWYHTAAKLGPAFPLGADATLINGLGRSPSTTAADLAVINVTKGKRYRFRLVSLSCDPNHTFSIDGHDLTIIEVDSINSQPLVVDSIQIFAAQRYSFVLNADQDVGNYWIRANPNFGNVGFAGGINSAILRYDGADPVEPTTTQTTPTKPLNEVDLHPLATMAVPGSPVAGGVDTAINMAFNFNGTNFFINGASFVPPTVPVLLQIISGAQNAQDLLPSGSVYSLPSNADIEISFPATAAAPGAPHPFHLHGHAFAVVRSAGSTVYNYDNPIFRDVVSTGTPAAGDNVTIRFRTDNPGPWFLHCHIDFHLEAGFAVVFAEDIPDVASANPVPQAWSDLCPIYDALDVNDQ</sequence>
<reference key="1">
    <citation type="journal article" date="1990" name="J. Biol. Chem.">
        <title>Cloning, sequence analysis, and expression of ligninolytic phenoloxidase genes of the white-rot basidiomycete Coriolus hirsutus.</title>
        <authorList>
            <person name="Kojima Y."/>
            <person name="Tsukuda Y."/>
            <person name="Kawai Y."/>
            <person name="Tsukamoto A."/>
            <person name="Sugiura J."/>
            <person name="Sakaino M."/>
            <person name="Kita Y."/>
        </authorList>
    </citation>
    <scope>NUCLEOTIDE SEQUENCE [GENOMIC DNA]</scope>
    <scope>PARTIAL PROTEIN SEQUENCE</scope>
    <scope>VARIANT PRO-411</scope>
    <source>
        <strain>NBRC 4917</strain>
    </source>
</reference>
<evidence type="ECO:0000250" key="1">
    <source>
        <dbReference type="UniProtKB" id="D0VWU3"/>
    </source>
</evidence>
<evidence type="ECO:0000250" key="2">
    <source>
        <dbReference type="UniProtKB" id="Q70KY3"/>
    </source>
</evidence>
<evidence type="ECO:0000255" key="3"/>
<evidence type="ECO:0000269" key="4">
    <source>
    </source>
</evidence>
<evidence type="ECO:0000305" key="5"/>
<comment type="function">
    <text evidence="2 4">Lignin degradation and detoxification of lignin-derived products (By similarity). Has activity towards guaiacol (PubMed:2394718).</text>
</comment>
<comment type="catalytic activity">
    <reaction evidence="2">
        <text>4 hydroquinone + O2 = 4 benzosemiquinone + 2 H2O</text>
        <dbReference type="Rhea" id="RHEA:11276"/>
        <dbReference type="ChEBI" id="CHEBI:15377"/>
        <dbReference type="ChEBI" id="CHEBI:15379"/>
        <dbReference type="ChEBI" id="CHEBI:17594"/>
        <dbReference type="ChEBI" id="CHEBI:17977"/>
        <dbReference type="EC" id="1.10.3.2"/>
    </reaction>
</comment>
<comment type="cofactor">
    <cofactor evidence="2">
        <name>Cu cation</name>
        <dbReference type="ChEBI" id="CHEBI:23378"/>
    </cofactor>
    <text evidence="2">Binds 4 Cu cations per monomer.</text>
</comment>
<comment type="subcellular location">
    <subcellularLocation>
        <location evidence="2">Secreted</location>
    </subcellularLocation>
</comment>
<comment type="polymorphism">
    <text>2 allelic forms exist in position 111.</text>
</comment>
<comment type="similarity">
    <text evidence="5">Belongs to the multicopper oxidase family.</text>
</comment>
<name>LAC1_TRAHI</name>
<accession>Q02497</accession>